<gene>
    <name evidence="20" type="primary">Ddx4</name>
    <name evidence="16" type="synonym">Mvh</name>
    <name type="synonym">Vasa</name>
</gene>
<protein>
    <recommendedName>
        <fullName evidence="19">ATP-dependent RNA helicase DDX4</fullName>
        <ecNumber evidence="19">3.6.4.13</ecNumber>
    </recommendedName>
    <alternativeName>
        <fullName>DEAD box protein 4</fullName>
    </alternativeName>
    <alternativeName>
        <fullName evidence="16 17">Mvh</fullName>
    </alternativeName>
    <alternativeName>
        <fullName evidence="17">Vasa homolog</fullName>
    </alternativeName>
</protein>
<proteinExistence type="evidence at protein level"/>
<accession>Q61496</accession>
<accession>Q9D5X7</accession>
<name>DDX4_MOUSE</name>
<keyword id="KW-0002">3D-structure</keyword>
<keyword id="KW-0067">ATP-binding</keyword>
<keyword id="KW-0963">Cytoplasm</keyword>
<keyword id="KW-0217">Developmental protein</keyword>
<keyword id="KW-0221">Differentiation</keyword>
<keyword id="KW-0347">Helicase</keyword>
<keyword id="KW-0378">Hydrolase</keyword>
<keyword id="KW-0469">Meiosis</keyword>
<keyword id="KW-0547">Nucleotide-binding</keyword>
<keyword id="KW-0597">Phosphoprotein</keyword>
<keyword id="KW-1185">Reference proteome</keyword>
<keyword id="KW-0677">Repeat</keyword>
<keyword id="KW-0943">RNA-mediated gene silencing</keyword>
<keyword id="KW-0744">Spermatogenesis</keyword>
<feature type="chain" id="PRO_0000054979" description="ATP-dependent RNA helicase DDX4">
    <location>
        <begin position="1"/>
        <end position="702"/>
    </location>
</feature>
<feature type="domain" description="Helicase ATP-binding" evidence="2">
    <location>
        <begin position="292"/>
        <end position="475"/>
    </location>
</feature>
<feature type="domain" description="Helicase C-terminal" evidence="3">
    <location>
        <begin position="503"/>
        <end position="648"/>
    </location>
</feature>
<feature type="region of interest" description="Disordered" evidence="4">
    <location>
        <begin position="22"/>
        <end position="228"/>
    </location>
</feature>
<feature type="region of interest" description="Interaction with RANBP9" evidence="11">
    <location>
        <begin position="201"/>
        <end position="220"/>
    </location>
</feature>
<feature type="region of interest" description="Disordered" evidence="4">
    <location>
        <begin position="681"/>
        <end position="702"/>
    </location>
</feature>
<feature type="short sequence motif" description="Q motif">
    <location>
        <begin position="261"/>
        <end position="289"/>
    </location>
</feature>
<feature type="short sequence motif" description="DEAD box" evidence="13">
    <location>
        <begin position="419"/>
        <end position="422"/>
    </location>
</feature>
<feature type="compositionally biased region" description="Polar residues" evidence="4">
    <location>
        <begin position="29"/>
        <end position="46"/>
    </location>
</feature>
<feature type="compositionally biased region" description="Gly residues" evidence="4">
    <location>
        <begin position="58"/>
        <end position="68"/>
    </location>
</feature>
<feature type="compositionally biased region" description="Gly residues" evidence="4">
    <location>
        <begin position="125"/>
        <end position="137"/>
    </location>
</feature>
<feature type="compositionally biased region" description="Polar residues" evidence="4">
    <location>
        <begin position="141"/>
        <end position="150"/>
    </location>
</feature>
<feature type="compositionally biased region" description="Polar residues" evidence="4">
    <location>
        <begin position="195"/>
        <end position="215"/>
    </location>
</feature>
<feature type="compositionally biased region" description="Polar residues" evidence="4">
    <location>
        <begin position="681"/>
        <end position="693"/>
    </location>
</feature>
<feature type="binding site" evidence="2">
    <location>
        <begin position="305"/>
        <end position="312"/>
    </location>
    <ligand>
        <name>ATP</name>
        <dbReference type="ChEBI" id="CHEBI:30616"/>
    </ligand>
</feature>
<feature type="modified residue" description="Phosphoserine" evidence="1">
    <location>
        <position position="195"/>
    </location>
</feature>
<feature type="modified residue" description="Phosphoserine" evidence="21">
    <location>
        <position position="199"/>
    </location>
</feature>
<feature type="modified residue" description="Phosphoserine" evidence="21">
    <location>
        <position position="700"/>
    </location>
</feature>
<feature type="mutagenesis site" description="In Mvh(KI); heterozygous and homozygous knockin male mice are infertile due to derepression of transposable elements. Defects in piRNA biogenesis. Pre-piRNAs fail to mature into piRNAs." evidence="13">
    <original>E</original>
    <variation>Q</variation>
    <location>
        <position position="446"/>
    </location>
</feature>
<feature type="sequence conflict" description="In Ref. 2; BAA03584." evidence="18" ref="2">
    <original>R</original>
    <variation>C</variation>
    <location>
        <position position="152"/>
    </location>
</feature>
<feature type="sequence conflict" description="In Ref. 2; BAA03584." evidence="18" ref="2">
    <original>LFGSR</original>
    <variation>FLVLG</variation>
    <location>
        <begin position="156"/>
        <end position="160"/>
    </location>
</feature>
<feature type="sequence conflict" description="In Ref. 2; BAA03584." evidence="18" ref="2">
    <original>A</original>
    <variation>R</variation>
    <location>
        <position position="277"/>
    </location>
</feature>
<feature type="sequence conflict" description="In Ref. 2; BAA03584." evidence="18" ref="2">
    <original>S</original>
    <variation>T</variation>
    <location>
        <position position="291"/>
    </location>
</feature>
<feature type="sequence conflict" description="In Ref. 2; BAA03584." evidence="18" ref="2">
    <original>RA</original>
    <variation>IS</variation>
    <location>
        <begin position="368"/>
        <end position="369"/>
    </location>
</feature>
<feature type="sequence conflict" description="In Ref. 2; BAA03584." evidence="18" ref="2">
    <original>R</original>
    <variation>S</variation>
    <location>
        <position position="423"/>
    </location>
</feature>
<feature type="sequence conflict" description="In Ref. 2; BAA03584." evidence="18" ref="2">
    <original>G</original>
    <variation>A</variation>
    <location>
        <position position="430"/>
    </location>
</feature>
<feature type="sequence conflict" description="In Ref. 2; BAA03584." evidence="18" ref="2">
    <original>M</original>
    <variation>I</variation>
    <location>
        <position position="433"/>
    </location>
</feature>
<feature type="sequence conflict" description="In Ref. 2; BAA03584." evidence="18" ref="2">
    <original>R</original>
    <variation>H</variation>
    <location>
        <position position="448"/>
    </location>
</feature>
<feature type="sequence conflict" description="In Ref. 2; BAA03584." evidence="18" ref="2">
    <original>S</original>
    <variation>N</variation>
    <location>
        <position position="472"/>
    </location>
</feature>
<feature type="sequence conflict" description="In Ref. 2; BAA03584." evidence="18" ref="2">
    <original>SKREKLVEILR</original>
    <variation>QKEKSLLRFYE</variation>
    <location>
        <begin position="499"/>
        <end position="509"/>
    </location>
</feature>
<feature type="sequence conflict" description="In Ref. 2; BAA03584." evidence="18" ref="2">
    <original>T</original>
    <variation>S</variation>
    <location>
        <position position="540"/>
    </location>
</feature>
<feature type="sequence conflict" description="In Ref. 2; BAA03584." evidence="18" ref="2">
    <original>HTLNTAGISSSQAPNPVDDESWD</original>
    <variation>AHVEYSGDFFFTSSQSS</variation>
    <location>
        <begin position="680"/>
        <end position="702"/>
    </location>
</feature>
<dbReference type="EC" id="3.6.4.13" evidence="19"/>
<dbReference type="EMBL" id="AK014844">
    <property type="protein sequence ID" value="BAB29578.1"/>
    <property type="molecule type" value="mRNA"/>
</dbReference>
<dbReference type="EMBL" id="D14859">
    <property type="protein sequence ID" value="BAA03584.1"/>
    <property type="molecule type" value="mRNA"/>
</dbReference>
<dbReference type="CCDS" id="CCDS26774.1"/>
<dbReference type="RefSeq" id="NP_034159.1">
    <property type="nucleotide sequence ID" value="NM_010029.2"/>
</dbReference>
<dbReference type="PDB" id="5JIU">
    <property type="method" value="X-ray"/>
    <property type="resolution" value="2.05 A"/>
    <property type="chains" value="C/D=201-220"/>
</dbReference>
<dbReference type="PDBsum" id="5JIU"/>
<dbReference type="SMR" id="Q61496"/>
<dbReference type="BioGRID" id="199085">
    <property type="interactions" value="7"/>
</dbReference>
<dbReference type="DIP" id="DIP-61113N"/>
<dbReference type="FunCoup" id="Q61496">
    <property type="interactions" value="65"/>
</dbReference>
<dbReference type="IntAct" id="Q61496">
    <property type="interactions" value="1"/>
</dbReference>
<dbReference type="STRING" id="10090.ENSMUSP00000096769"/>
<dbReference type="GlyGen" id="Q61496">
    <property type="glycosylation" value="1 site, 1 N-linked glycan (1 site)"/>
</dbReference>
<dbReference type="iPTMnet" id="Q61496"/>
<dbReference type="PhosphoSitePlus" id="Q61496"/>
<dbReference type="REPRODUCTION-2DPAGE" id="IPI00121394"/>
<dbReference type="REPRODUCTION-2DPAGE" id="Q61496"/>
<dbReference type="jPOST" id="Q61496"/>
<dbReference type="PaxDb" id="10090-ENSMUSP00000096769"/>
<dbReference type="PeptideAtlas" id="Q61496"/>
<dbReference type="ProteomicsDB" id="279854"/>
<dbReference type="Antibodypedia" id="23442">
    <property type="antibodies" value="410 antibodies from 39 providers"/>
</dbReference>
<dbReference type="DNASU" id="13206"/>
<dbReference type="Ensembl" id="ENSMUST00000075748.7">
    <property type="protein sequence ID" value="ENSMUSP00000075157.6"/>
    <property type="gene ID" value="ENSMUSG00000021758.15"/>
</dbReference>
<dbReference type="GeneID" id="13206"/>
<dbReference type="KEGG" id="mmu:13206"/>
<dbReference type="UCSC" id="uc007rwm.2">
    <property type="organism name" value="mouse"/>
</dbReference>
<dbReference type="AGR" id="MGI:102670"/>
<dbReference type="CTD" id="54514"/>
<dbReference type="MGI" id="MGI:102670">
    <property type="gene designation" value="Ddx4"/>
</dbReference>
<dbReference type="VEuPathDB" id="HostDB:ENSMUSG00000021758"/>
<dbReference type="eggNOG" id="KOG0335">
    <property type="taxonomic scope" value="Eukaryota"/>
</dbReference>
<dbReference type="GeneTree" id="ENSGT00940000157507"/>
<dbReference type="HOGENOM" id="CLU_003041_16_3_1"/>
<dbReference type="InParanoid" id="Q61496"/>
<dbReference type="OMA" id="NRXSNND"/>
<dbReference type="OrthoDB" id="196131at2759"/>
<dbReference type="PhylomeDB" id="Q61496"/>
<dbReference type="BioGRID-ORCS" id="13206">
    <property type="hits" value="0 hits in 78 CRISPR screens"/>
</dbReference>
<dbReference type="CD-CODE" id="DE1E139C">
    <property type="entry name" value="Chromatoid body"/>
</dbReference>
<dbReference type="ChiTaRS" id="Ddx4">
    <property type="organism name" value="mouse"/>
</dbReference>
<dbReference type="PRO" id="PR:Q61496"/>
<dbReference type="Proteomes" id="UP000000589">
    <property type="component" value="Chromosome 13"/>
</dbReference>
<dbReference type="RNAct" id="Q61496">
    <property type="molecule type" value="protein"/>
</dbReference>
<dbReference type="Bgee" id="ENSMUSG00000021758">
    <property type="expression patterns" value="Expressed in spermatocyte and 46 other cell types or tissues"/>
</dbReference>
<dbReference type="ExpressionAtlas" id="Q61496">
    <property type="expression patterns" value="baseline and differential"/>
</dbReference>
<dbReference type="GO" id="GO:0033391">
    <property type="term" value="C:chromatoid body"/>
    <property type="evidence" value="ECO:0000314"/>
    <property type="project" value="MGI"/>
</dbReference>
<dbReference type="GO" id="GO:0005737">
    <property type="term" value="C:cytoplasm"/>
    <property type="evidence" value="ECO:0000314"/>
    <property type="project" value="MGI"/>
</dbReference>
<dbReference type="GO" id="GO:0005829">
    <property type="term" value="C:cytosol"/>
    <property type="evidence" value="ECO:0000304"/>
    <property type="project" value="Reactome"/>
</dbReference>
<dbReference type="GO" id="GO:0005634">
    <property type="term" value="C:nucleus"/>
    <property type="evidence" value="ECO:0000314"/>
    <property type="project" value="MGI"/>
</dbReference>
<dbReference type="GO" id="GO:0048471">
    <property type="term" value="C:perinuclear region of cytoplasm"/>
    <property type="evidence" value="ECO:0000314"/>
    <property type="project" value="MGI"/>
</dbReference>
<dbReference type="GO" id="GO:0071546">
    <property type="term" value="C:pi-body"/>
    <property type="evidence" value="ECO:0000314"/>
    <property type="project" value="UniProtKB"/>
</dbReference>
<dbReference type="GO" id="GO:0071547">
    <property type="term" value="C:piP-body"/>
    <property type="evidence" value="ECO:0000314"/>
    <property type="project" value="UniProtKB"/>
</dbReference>
<dbReference type="GO" id="GO:1990904">
    <property type="term" value="C:ribonucleoprotein complex"/>
    <property type="evidence" value="ECO:0000314"/>
    <property type="project" value="MGI"/>
</dbReference>
<dbReference type="GO" id="GO:0005524">
    <property type="term" value="F:ATP binding"/>
    <property type="evidence" value="ECO:0007669"/>
    <property type="project" value="UniProtKB-KW"/>
</dbReference>
<dbReference type="GO" id="GO:0016887">
    <property type="term" value="F:ATP hydrolysis activity"/>
    <property type="evidence" value="ECO:0000315"/>
    <property type="project" value="UniProtKB"/>
</dbReference>
<dbReference type="GO" id="GO:0003676">
    <property type="term" value="F:nucleic acid binding"/>
    <property type="evidence" value="ECO:0007669"/>
    <property type="project" value="InterPro"/>
</dbReference>
<dbReference type="GO" id="GO:0003724">
    <property type="term" value="F:RNA helicase activity"/>
    <property type="evidence" value="ECO:0007669"/>
    <property type="project" value="UniProtKB-EC"/>
</dbReference>
<dbReference type="GO" id="GO:0030154">
    <property type="term" value="P:cell differentiation"/>
    <property type="evidence" value="ECO:0007669"/>
    <property type="project" value="UniProtKB-KW"/>
</dbReference>
<dbReference type="GO" id="GO:0007141">
    <property type="term" value="P:male meiosis I"/>
    <property type="evidence" value="ECO:0000315"/>
    <property type="project" value="UniProtKB"/>
</dbReference>
<dbReference type="GO" id="GO:0007140">
    <property type="term" value="P:male meiotic nuclear division"/>
    <property type="evidence" value="ECO:0000315"/>
    <property type="project" value="UniProtKB"/>
</dbReference>
<dbReference type="GO" id="GO:0034587">
    <property type="term" value="P:piRNA processing"/>
    <property type="evidence" value="ECO:0000315"/>
    <property type="project" value="UniProtKB"/>
</dbReference>
<dbReference type="GO" id="GO:0032880">
    <property type="term" value="P:regulation of protein localization"/>
    <property type="evidence" value="ECO:0000315"/>
    <property type="project" value="MGI"/>
</dbReference>
<dbReference type="GO" id="GO:0140965">
    <property type="term" value="P:secondary piRNA processing"/>
    <property type="evidence" value="ECO:0000315"/>
    <property type="project" value="UniProtKB"/>
</dbReference>
<dbReference type="GO" id="GO:0007283">
    <property type="term" value="P:spermatogenesis"/>
    <property type="evidence" value="ECO:0000315"/>
    <property type="project" value="UniProtKB"/>
</dbReference>
<dbReference type="GO" id="GO:0141196">
    <property type="term" value="P:transposable element silencing by piRNA-mediated DNA methylation"/>
    <property type="evidence" value="ECO:0000315"/>
    <property type="project" value="UniProtKB"/>
</dbReference>
<dbReference type="GO" id="GO:0141006">
    <property type="term" value="P:transposable element silencing by piRNA-mediated heterochromatin formation"/>
    <property type="evidence" value="ECO:0000315"/>
    <property type="project" value="UniProtKB"/>
</dbReference>
<dbReference type="CDD" id="cd18052">
    <property type="entry name" value="DEADc_DDX4"/>
    <property type="match status" value="1"/>
</dbReference>
<dbReference type="CDD" id="cd18787">
    <property type="entry name" value="SF2_C_DEAD"/>
    <property type="match status" value="1"/>
</dbReference>
<dbReference type="FunFam" id="3.40.50.300:FF:000008">
    <property type="entry name" value="ATP-dependent RNA helicase RhlB"/>
    <property type="match status" value="1"/>
</dbReference>
<dbReference type="FunFam" id="3.40.50.300:FF:000397">
    <property type="entry name" value="Probable ATP-dependent RNA helicase DDX4"/>
    <property type="match status" value="1"/>
</dbReference>
<dbReference type="Gene3D" id="3.40.50.300">
    <property type="entry name" value="P-loop containing nucleotide triphosphate hydrolases"/>
    <property type="match status" value="2"/>
</dbReference>
<dbReference type="IDEAL" id="IID50332"/>
<dbReference type="InterPro" id="IPR011545">
    <property type="entry name" value="DEAD/DEAH_box_helicase_dom"/>
</dbReference>
<dbReference type="InterPro" id="IPR014001">
    <property type="entry name" value="Helicase_ATP-bd"/>
</dbReference>
<dbReference type="InterPro" id="IPR001650">
    <property type="entry name" value="Helicase_C-like"/>
</dbReference>
<dbReference type="InterPro" id="IPR027417">
    <property type="entry name" value="P-loop_NTPase"/>
</dbReference>
<dbReference type="InterPro" id="IPR000629">
    <property type="entry name" value="RNA-helicase_DEAD-box_CS"/>
</dbReference>
<dbReference type="InterPro" id="IPR014014">
    <property type="entry name" value="RNA_helicase_DEAD_Q_motif"/>
</dbReference>
<dbReference type="PANTHER" id="PTHR47958">
    <property type="entry name" value="ATP-DEPENDENT RNA HELICASE DBP3"/>
    <property type="match status" value="1"/>
</dbReference>
<dbReference type="Pfam" id="PF00270">
    <property type="entry name" value="DEAD"/>
    <property type="match status" value="1"/>
</dbReference>
<dbReference type="Pfam" id="PF00271">
    <property type="entry name" value="Helicase_C"/>
    <property type="match status" value="1"/>
</dbReference>
<dbReference type="SMART" id="SM00487">
    <property type="entry name" value="DEXDc"/>
    <property type="match status" value="1"/>
</dbReference>
<dbReference type="SMART" id="SM00490">
    <property type="entry name" value="HELICc"/>
    <property type="match status" value="1"/>
</dbReference>
<dbReference type="SUPFAM" id="SSF52540">
    <property type="entry name" value="P-loop containing nucleoside triphosphate hydrolases"/>
    <property type="match status" value="2"/>
</dbReference>
<dbReference type="PROSITE" id="PS00039">
    <property type="entry name" value="DEAD_ATP_HELICASE"/>
    <property type="match status" value="1"/>
</dbReference>
<dbReference type="PROSITE" id="PS51192">
    <property type="entry name" value="HELICASE_ATP_BIND_1"/>
    <property type="match status" value="1"/>
</dbReference>
<dbReference type="PROSITE" id="PS51194">
    <property type="entry name" value="HELICASE_CTER"/>
    <property type="match status" value="1"/>
</dbReference>
<dbReference type="PROSITE" id="PS51195">
    <property type="entry name" value="Q_MOTIF"/>
    <property type="match status" value="1"/>
</dbReference>
<organism>
    <name type="scientific">Mus musculus</name>
    <name type="common">Mouse</name>
    <dbReference type="NCBI Taxonomy" id="10090"/>
    <lineage>
        <taxon>Eukaryota</taxon>
        <taxon>Metazoa</taxon>
        <taxon>Chordata</taxon>
        <taxon>Craniata</taxon>
        <taxon>Vertebrata</taxon>
        <taxon>Euteleostomi</taxon>
        <taxon>Mammalia</taxon>
        <taxon>Eutheria</taxon>
        <taxon>Euarchontoglires</taxon>
        <taxon>Glires</taxon>
        <taxon>Rodentia</taxon>
        <taxon>Myomorpha</taxon>
        <taxon>Muroidea</taxon>
        <taxon>Muridae</taxon>
        <taxon>Murinae</taxon>
        <taxon>Mus</taxon>
        <taxon>Mus</taxon>
    </lineage>
</organism>
<reference key="1">
    <citation type="journal article" date="2005" name="Science">
        <title>The transcriptional landscape of the mammalian genome.</title>
        <authorList>
            <person name="Carninci P."/>
            <person name="Kasukawa T."/>
            <person name="Katayama S."/>
            <person name="Gough J."/>
            <person name="Frith M.C."/>
            <person name="Maeda N."/>
            <person name="Oyama R."/>
            <person name="Ravasi T."/>
            <person name="Lenhard B."/>
            <person name="Wells C."/>
            <person name="Kodzius R."/>
            <person name="Shimokawa K."/>
            <person name="Bajic V.B."/>
            <person name="Brenner S.E."/>
            <person name="Batalov S."/>
            <person name="Forrest A.R."/>
            <person name="Zavolan M."/>
            <person name="Davis M.J."/>
            <person name="Wilming L.G."/>
            <person name="Aidinis V."/>
            <person name="Allen J.E."/>
            <person name="Ambesi-Impiombato A."/>
            <person name="Apweiler R."/>
            <person name="Aturaliya R.N."/>
            <person name="Bailey T.L."/>
            <person name="Bansal M."/>
            <person name="Baxter L."/>
            <person name="Beisel K.W."/>
            <person name="Bersano T."/>
            <person name="Bono H."/>
            <person name="Chalk A.M."/>
            <person name="Chiu K.P."/>
            <person name="Choudhary V."/>
            <person name="Christoffels A."/>
            <person name="Clutterbuck D.R."/>
            <person name="Crowe M.L."/>
            <person name="Dalla E."/>
            <person name="Dalrymple B.P."/>
            <person name="de Bono B."/>
            <person name="Della Gatta G."/>
            <person name="di Bernardo D."/>
            <person name="Down T."/>
            <person name="Engstrom P."/>
            <person name="Fagiolini M."/>
            <person name="Faulkner G."/>
            <person name="Fletcher C.F."/>
            <person name="Fukushima T."/>
            <person name="Furuno M."/>
            <person name="Futaki S."/>
            <person name="Gariboldi M."/>
            <person name="Georgii-Hemming P."/>
            <person name="Gingeras T.R."/>
            <person name="Gojobori T."/>
            <person name="Green R.E."/>
            <person name="Gustincich S."/>
            <person name="Harbers M."/>
            <person name="Hayashi Y."/>
            <person name="Hensch T.K."/>
            <person name="Hirokawa N."/>
            <person name="Hill D."/>
            <person name="Huminiecki L."/>
            <person name="Iacono M."/>
            <person name="Ikeo K."/>
            <person name="Iwama A."/>
            <person name="Ishikawa T."/>
            <person name="Jakt M."/>
            <person name="Kanapin A."/>
            <person name="Katoh M."/>
            <person name="Kawasawa Y."/>
            <person name="Kelso J."/>
            <person name="Kitamura H."/>
            <person name="Kitano H."/>
            <person name="Kollias G."/>
            <person name="Krishnan S.P."/>
            <person name="Kruger A."/>
            <person name="Kummerfeld S.K."/>
            <person name="Kurochkin I.V."/>
            <person name="Lareau L.F."/>
            <person name="Lazarevic D."/>
            <person name="Lipovich L."/>
            <person name="Liu J."/>
            <person name="Liuni S."/>
            <person name="McWilliam S."/>
            <person name="Madan Babu M."/>
            <person name="Madera M."/>
            <person name="Marchionni L."/>
            <person name="Matsuda H."/>
            <person name="Matsuzawa S."/>
            <person name="Miki H."/>
            <person name="Mignone F."/>
            <person name="Miyake S."/>
            <person name="Morris K."/>
            <person name="Mottagui-Tabar S."/>
            <person name="Mulder N."/>
            <person name="Nakano N."/>
            <person name="Nakauchi H."/>
            <person name="Ng P."/>
            <person name="Nilsson R."/>
            <person name="Nishiguchi S."/>
            <person name="Nishikawa S."/>
            <person name="Nori F."/>
            <person name="Ohara O."/>
            <person name="Okazaki Y."/>
            <person name="Orlando V."/>
            <person name="Pang K.C."/>
            <person name="Pavan W.J."/>
            <person name="Pavesi G."/>
            <person name="Pesole G."/>
            <person name="Petrovsky N."/>
            <person name="Piazza S."/>
            <person name="Reed J."/>
            <person name="Reid J.F."/>
            <person name="Ring B.Z."/>
            <person name="Ringwald M."/>
            <person name="Rost B."/>
            <person name="Ruan Y."/>
            <person name="Salzberg S.L."/>
            <person name="Sandelin A."/>
            <person name="Schneider C."/>
            <person name="Schoenbach C."/>
            <person name="Sekiguchi K."/>
            <person name="Semple C.A."/>
            <person name="Seno S."/>
            <person name="Sessa L."/>
            <person name="Sheng Y."/>
            <person name="Shibata Y."/>
            <person name="Shimada H."/>
            <person name="Shimada K."/>
            <person name="Silva D."/>
            <person name="Sinclair B."/>
            <person name="Sperling S."/>
            <person name="Stupka E."/>
            <person name="Sugiura K."/>
            <person name="Sultana R."/>
            <person name="Takenaka Y."/>
            <person name="Taki K."/>
            <person name="Tammoja K."/>
            <person name="Tan S.L."/>
            <person name="Tang S."/>
            <person name="Taylor M.S."/>
            <person name="Tegner J."/>
            <person name="Teichmann S.A."/>
            <person name="Ueda H.R."/>
            <person name="van Nimwegen E."/>
            <person name="Verardo R."/>
            <person name="Wei C.L."/>
            <person name="Yagi K."/>
            <person name="Yamanishi H."/>
            <person name="Zabarovsky E."/>
            <person name="Zhu S."/>
            <person name="Zimmer A."/>
            <person name="Hide W."/>
            <person name="Bult C."/>
            <person name="Grimmond S.M."/>
            <person name="Teasdale R.D."/>
            <person name="Liu E.T."/>
            <person name="Brusic V."/>
            <person name="Quackenbush J."/>
            <person name="Wahlestedt C."/>
            <person name="Mattick J.S."/>
            <person name="Hume D.A."/>
            <person name="Kai C."/>
            <person name="Sasaki D."/>
            <person name="Tomaru Y."/>
            <person name="Fukuda S."/>
            <person name="Kanamori-Katayama M."/>
            <person name="Suzuki M."/>
            <person name="Aoki J."/>
            <person name="Arakawa T."/>
            <person name="Iida J."/>
            <person name="Imamura K."/>
            <person name="Itoh M."/>
            <person name="Kato T."/>
            <person name="Kawaji H."/>
            <person name="Kawagashira N."/>
            <person name="Kawashima T."/>
            <person name="Kojima M."/>
            <person name="Kondo S."/>
            <person name="Konno H."/>
            <person name="Nakano K."/>
            <person name="Ninomiya N."/>
            <person name="Nishio T."/>
            <person name="Okada M."/>
            <person name="Plessy C."/>
            <person name="Shibata K."/>
            <person name="Shiraki T."/>
            <person name="Suzuki S."/>
            <person name="Tagami M."/>
            <person name="Waki K."/>
            <person name="Watahiki A."/>
            <person name="Okamura-Oho Y."/>
            <person name="Suzuki H."/>
            <person name="Kawai J."/>
            <person name="Hayashizaki Y."/>
        </authorList>
    </citation>
    <scope>NUCLEOTIDE SEQUENCE [LARGE SCALE MRNA]</scope>
    <source>
        <strain>C57BL/6J</strain>
        <tissue>Testis</tissue>
    </source>
</reference>
<reference key="2">
    <citation type="journal article" date="1994" name="Proc. Natl. Acad. Sci. U.S.A.">
        <title>Isolation of a DEAD-family protein gene that encodes a murine homolog of Drosophila vasa and its specific expression in germ cell lineage.</title>
        <authorList>
            <person name="Fujiwara Y."/>
            <person name="Komiya T."/>
            <person name="Kawabata H."/>
            <person name="Sato M."/>
            <person name="Fujimoto H."/>
            <person name="Furusawa M."/>
            <person name="Noce T."/>
        </authorList>
    </citation>
    <scope>NUCLEOTIDE SEQUENCE [MRNA] OF 60-702</scope>
    <scope>DEVELOPMENTAL STAGE</scope>
    <source>
        <strain>BALB/cJ</strain>
        <tissue>Testis</tissue>
    </source>
</reference>
<reference key="3">
    <citation type="journal article" date="2004" name="Development">
        <title>Mili, a mammalian member of piwi family gene, is essential for spermatogenesis.</title>
        <authorList>
            <person name="Kuramochi-Miyagawa S."/>
            <person name="Kimura T."/>
            <person name="Ijiri T.W."/>
            <person name="Isobe T."/>
            <person name="Asada N."/>
            <person name="Fujita Y."/>
            <person name="Ikawa M."/>
            <person name="Iwai N."/>
            <person name="Okabe M."/>
            <person name="Deng W."/>
            <person name="Lin H."/>
            <person name="Matsuda Y."/>
            <person name="Nakano T."/>
        </authorList>
    </citation>
    <scope>INTERACTION WITH PIWIL2</scope>
</reference>
<reference key="4">
    <citation type="journal article" date="2004" name="Mol. Reprod. Dev.">
        <title>Mouse RanBPM is a partner gene to a germline specific RNA helicase, mouse vasa homolog protein.</title>
        <authorList>
            <person name="Shibata N."/>
            <person name="Tsunekawa N."/>
            <person name="Okamoto-Ito S."/>
            <person name="Akasu R."/>
            <person name="Tokumasu A."/>
            <person name="Noce T."/>
        </authorList>
    </citation>
    <scope>INTERACTION WITH RANBP9</scope>
    <source>
        <tissue>Testis</tissue>
    </source>
</reference>
<reference key="5">
    <citation type="journal article" date="2006" name="Hum. Mol. Genet.">
        <title>Mouse MAELSTROM: the link between meiotic silencing of unsynapsed chromatin and microRNA pathway?</title>
        <authorList>
            <person name="Costa Y."/>
            <person name="Speed R.M."/>
            <person name="Gautier P."/>
            <person name="Semple C.A."/>
            <person name="Maratou K."/>
            <person name="Turner J.M.A."/>
            <person name="Cooke H.J."/>
        </authorList>
    </citation>
    <scope>INTERACTION WITH MAEL</scope>
</reference>
<reference key="6">
    <citation type="journal article" date="2007" name="Dev. Biol.">
        <title>Tudor-related proteins TDRD1/MTR-1, TDRD6 and TDRD7/TRAP: domain composition, intracellular localization, and function in male germ cells in mice.</title>
        <authorList>
            <person name="Hosokawa M."/>
            <person name="Shoji M."/>
            <person name="Kitamura K."/>
            <person name="Tanaka T."/>
            <person name="Noce T."/>
            <person name="Chuma S."/>
            <person name="Nakatsuji N."/>
        </authorList>
    </citation>
    <scope>IDENTIFICATION IN A MRNP COMPLEX</scope>
</reference>
<reference key="7">
    <citation type="journal article" date="2010" name="Cell">
        <title>A tissue-specific atlas of mouse protein phosphorylation and expression.</title>
        <authorList>
            <person name="Huttlin E.L."/>
            <person name="Jedrychowski M.P."/>
            <person name="Elias J.E."/>
            <person name="Goswami T."/>
            <person name="Rad R."/>
            <person name="Beausoleil S.A."/>
            <person name="Villen J."/>
            <person name="Haas W."/>
            <person name="Sowa M.E."/>
            <person name="Gygi S.P."/>
        </authorList>
    </citation>
    <scope>PHOSPHORYLATION [LARGE SCALE ANALYSIS] AT SER-199 AND SER-700</scope>
    <scope>IDENTIFICATION BY MASS SPECTROMETRY [LARGE SCALE ANALYSIS]</scope>
    <source>
        <tissue>Testis</tissue>
    </source>
</reference>
<reference key="8">
    <citation type="journal article" date="2010" name="Genes Dev.">
        <title>MVH in piRNA processing and gene silencing of retrotransposons.</title>
        <authorList>
            <person name="Kuramochi-Miyagawa S."/>
            <person name="Watanabe T."/>
            <person name="Gotoh K."/>
            <person name="Takamatsu K."/>
            <person name="Chuma S."/>
            <person name="Kojima-Kita K."/>
            <person name="Shiromoto Y."/>
            <person name="Asada N."/>
            <person name="Toyoda A."/>
            <person name="Fujiyama A."/>
            <person name="Totoki Y."/>
            <person name="Shibata T."/>
            <person name="Kimura T."/>
            <person name="Nakatsuji N."/>
            <person name="Noce T."/>
            <person name="Sasaki H."/>
            <person name="Nakano T."/>
        </authorList>
    </citation>
    <scope>FUNCTION</scope>
    <scope>SUBCELLULAR LOCATION</scope>
    <scope>DISRUPTION PHENOTYPE</scope>
</reference>
<reference key="9">
    <citation type="journal article" date="2012" name="PLoS ONE">
        <title>Circadian proteins CLOCK and BMAL1 in the chromatoid body, a RNA processing granule of male germ cells.</title>
        <authorList>
            <person name="Peruquetti R.L."/>
            <person name="de Mateo S."/>
            <person name="Sassone-Corsi P."/>
        </authorList>
    </citation>
    <scope>SUBCELLULAR LOCATION</scope>
    <scope>TISSUE SPECIFICITY</scope>
    <scope>INTERACTION WITH CLOCK AND BMAL1</scope>
</reference>
<reference key="10">
    <citation type="journal article" date="2016" name="J. Mol. Biol.">
        <title>Structural Basis for the Interaction between the IUS-SPRY Domain of RanBPM and DDX-4 in Germ Cell Development.</title>
        <authorList>
            <person name="Hong S.K."/>
            <person name="Kim K.H."/>
            <person name="Song E.J."/>
            <person name="Kim E.E."/>
        </authorList>
    </citation>
    <scope>INTERACTION WITH RANBP9 AND RANBP10</scope>
</reference>
<reference key="11">
    <citation type="journal article" date="2017" name="Dev. Cell">
        <title>Distinct roles of RNA helicases MVH and TDRD9 in PIWI slicing-triggered mammalian piRNA biogenesis and function.</title>
        <authorList>
            <person name="Wenda J.M."/>
            <person name="Homolka D."/>
            <person name="Yang Z."/>
            <person name="Spinelli P."/>
            <person name="Sachidanandam R."/>
            <person name="Pandey R.R."/>
            <person name="Pillai R.S."/>
        </authorList>
    </citation>
    <scope>FUNCTION</scope>
    <scope>CATALYTIC ACTIVITY</scope>
    <scope>MUTAGENESIS OF GLU-446</scope>
</reference>
<reference key="12">
    <citation type="journal article" date="2017" name="J. Cell Sci.">
        <title>Tex19 paralogs are new members of the piRNA pathway controlling retrotransposon suppression.</title>
        <authorList>
            <person name="Tarabay Y."/>
            <person name="Achour M."/>
            <person name="Teletin M."/>
            <person name="Ye T."/>
            <person name="Teissandier A."/>
            <person name="Mark M."/>
            <person name="Bourc'his D."/>
            <person name="Viville S."/>
        </authorList>
    </citation>
    <scope>INTERACTION WITH TEX19.1</scope>
</reference>
<reference key="13">
    <citation type="journal article" date="2022" name="Sci. Adv.">
        <title>RNA binding protein RBM46 regulates mitotic-to-meiotic transition in spermatogenesis.</title>
        <authorList>
            <person name="Qian B."/>
            <person name="Li Y."/>
            <person name="Yan R."/>
            <person name="Han S."/>
            <person name="Bu Z."/>
            <person name="Gong J."/>
            <person name="Zheng B."/>
            <person name="Yuan Z."/>
            <person name="Ren S."/>
            <person name="He Q."/>
            <person name="Zhang J."/>
            <person name="Xu C."/>
            <person name="Wang R."/>
            <person name="Sun Z."/>
            <person name="Lin M."/>
            <person name="Zhou J."/>
            <person name="Ye L."/>
        </authorList>
    </citation>
    <scope>INTERACTION WITH RBM46</scope>
</reference>
<sequence>MGDEDWEAEILKPHVSSYVPVFEKDKYSSGANGDTFNRTSASSDIGESSKKENTSTTGGFGRGKGFGNRGFLNNKFEEGDSSGFWKESNNDCEDNQTRSRGFSKRGGCQDGNDSEASGPFRRGGRGSFRGCRGGFGLGRPNSESDQDQGTQRGGGLFGSRKPAASDSGNGDTYQSRSGSGRGGYKGLNEEVVTGSGKNSWKSETEGGESSDSQGPKVTYIPPPPPEDEDSIFAHYQTGINFDKYDTILVEVSGHDAPPAILTFEEANLCQTLNNNIAKAGYTKLTPVQKYSIPIVLAGRDLMACAQTGSGKTAAFLLPILAHMMRDGITASRFKELQEPECIIVAPTRELINQIYLEARKFSFGTCVRAVVIYGGTQFGHSVRQIVQGCNILCATPGRLMDIIGKEKIGLKQVKYLVLDEADRMLDMGFGPEMKKLISCPGMPSKEQRQTLLFSATFPEEIQRLAGDFLKSSYLFVAVGQVGGACRDVQQTILQVGQYSKREKLVEILRNIGDERTMVFVETKKKADFIATFLCQEKISTTSIHGDREQREREQALGDFRCGKCPVLVATSVAARGLDIENVQHVINFDLPSTIDEYVHRIGRTGRCGNTGRAISFFDTDSDNHLAQPLVKVLSDAQQDVPAWLEEIAFSTYVPPSFSSSTRGGAVFASVDTRKNYQGKHTLNTAGISSSQAPNPVDDESWD</sequence>
<comment type="function">
    <text evidence="9 13">ATP-dependent RNA helicase required during spermatogenesis to repress transposable elements and preventing their mobilization, which is essential for the germline integrity (PubMed:20439430, PubMed:28633017). Acts via the piRNA metabolic process, which mediates the repression of transposable elements during meiosis by forming complexes composed of piRNAs and Piwi proteins and governs the methylation and subsequent repression of transposons (PubMed:20439430, PubMed:28633017). Involved in the secondary piRNAs metabolic process, the production of piRNAs in fetal male germ cells through a ping-pong amplification cycle (PubMed:20439430, PubMed:28633017). Required for PIWIL2 slicing-triggered piRNA biogenesis: helicase activity enables utilization of one of the slice cleavage fragments generated by PIWIL2 and processing these pre-piRNAs into piRNAs (PubMed:28633017).</text>
</comment>
<comment type="catalytic activity">
    <reaction evidence="19">
        <text>ATP + H2O = ADP + phosphate + H(+)</text>
        <dbReference type="Rhea" id="RHEA:13065"/>
        <dbReference type="ChEBI" id="CHEBI:15377"/>
        <dbReference type="ChEBI" id="CHEBI:15378"/>
        <dbReference type="ChEBI" id="CHEBI:30616"/>
        <dbReference type="ChEBI" id="CHEBI:43474"/>
        <dbReference type="ChEBI" id="CHEBI:456216"/>
        <dbReference type="EC" id="3.6.4.13"/>
    </reaction>
</comment>
<comment type="subunit">
    <text evidence="5 6 7 8 10 11 12 14">Found in a mRNP complex, at least composed of TDRD1, TDRD6, TDRD7 and DDX4 (PubMed:17141210). Interacts with RANBP9 (PubMed:14648869, PubMed:27622290). Interacts with RANBP10 (PubMed:27622290). Interacts with PIWIL2 and MAEL (PubMed:14736746, PubMed:16787967). Interacts with BMAL1 and CLOCK (PubMed:22900038). Interacts with Tex19.1 and, probably, Tex19.2 (PubMed:28254886). Interacts with RBM46 (PubMed:36001654).</text>
</comment>
<comment type="interaction">
    <interactant intactId="EBI-15569589">
        <id>Q61496</id>
    </interactant>
    <interactant intactId="EBI-15569571">
        <id>Q9UPY3-1</id>
        <label>DICER1</label>
    </interactant>
    <organismsDiffer>true</organismsDiffer>
    <experiments>3</experiments>
</comment>
<comment type="subcellular location">
    <subcellularLocation>
        <location evidence="9 10">Cytoplasm</location>
    </subcellularLocation>
    <subcellularLocation>
        <location evidence="10">Cytoplasm</location>
        <location evidence="10">Perinuclear region</location>
    </subcellularLocation>
    <text evidence="9">Component of the meiotic nuage, also named P granule, a germ-cell-specific organelle required to repress transposon activity during meiosis.</text>
</comment>
<comment type="tissue specificity">
    <text evidence="10">Testis-specific.</text>
</comment>
<comment type="developmental stage">
    <text evidence="15">Expressed in spermatogenic cells from the spermatocyte stage to the round spermatid stage.</text>
</comment>
<comment type="disruption phenotype">
    <text evidence="9">Mice are viable but show male sterility due to defects in spermatogenesis. Retrotransposons are derepressed due to DNA demethylation. Defects are caused by impaired piRNA expression.</text>
</comment>
<comment type="similarity">
    <text evidence="18">Belongs to the DEAD box helicase family. DDX4/VASA subfamily.</text>
</comment>
<evidence type="ECO:0000250" key="1">
    <source>
        <dbReference type="UniProtKB" id="Q64060"/>
    </source>
</evidence>
<evidence type="ECO:0000255" key="2">
    <source>
        <dbReference type="PROSITE-ProRule" id="PRU00541"/>
    </source>
</evidence>
<evidence type="ECO:0000255" key="3">
    <source>
        <dbReference type="PROSITE-ProRule" id="PRU00542"/>
    </source>
</evidence>
<evidence type="ECO:0000256" key="4">
    <source>
        <dbReference type="SAM" id="MobiDB-lite"/>
    </source>
</evidence>
<evidence type="ECO:0000269" key="5">
    <source>
    </source>
</evidence>
<evidence type="ECO:0000269" key="6">
    <source>
    </source>
</evidence>
<evidence type="ECO:0000269" key="7">
    <source>
    </source>
</evidence>
<evidence type="ECO:0000269" key="8">
    <source>
    </source>
</evidence>
<evidence type="ECO:0000269" key="9">
    <source>
    </source>
</evidence>
<evidence type="ECO:0000269" key="10">
    <source>
    </source>
</evidence>
<evidence type="ECO:0000269" key="11">
    <source>
    </source>
</evidence>
<evidence type="ECO:0000269" key="12">
    <source>
    </source>
</evidence>
<evidence type="ECO:0000269" key="13">
    <source>
    </source>
</evidence>
<evidence type="ECO:0000269" key="14">
    <source>
    </source>
</evidence>
<evidence type="ECO:0000269" key="15">
    <source>
    </source>
</evidence>
<evidence type="ECO:0000303" key="16">
    <source>
    </source>
</evidence>
<evidence type="ECO:0000303" key="17">
    <source>
    </source>
</evidence>
<evidence type="ECO:0000305" key="18"/>
<evidence type="ECO:0000305" key="19">
    <source>
    </source>
</evidence>
<evidence type="ECO:0000312" key="20">
    <source>
        <dbReference type="MGI" id="MGI:102670"/>
    </source>
</evidence>
<evidence type="ECO:0007744" key="21">
    <source>
    </source>
</evidence>